<name>AMPPA_METBU</name>
<organism>
    <name type="scientific">Methanococcoides burtonii (strain DSM 6242 / NBRC 107633 / OCM 468 / ACE-M)</name>
    <dbReference type="NCBI Taxonomy" id="259564"/>
    <lineage>
        <taxon>Archaea</taxon>
        <taxon>Methanobacteriati</taxon>
        <taxon>Methanobacteriota</taxon>
        <taxon>Stenosarchaea group</taxon>
        <taxon>Methanomicrobia</taxon>
        <taxon>Methanosarcinales</taxon>
        <taxon>Methanosarcinaceae</taxon>
        <taxon>Methanococcoides</taxon>
    </lineage>
</organism>
<gene>
    <name type="ordered locus">Mbur_0255</name>
</gene>
<comment type="function">
    <text evidence="1">Catalyzes the conversion of AMP and phosphate to adenine and ribose 1,5-bisphosphate (R15P). Exhibits phosphorylase activity toward CMP and UMP in addition to AMP. Functions in an archaeal AMP degradation pathway, together with R15P isomerase and RubisCO.</text>
</comment>
<comment type="catalytic activity">
    <reaction evidence="1">
        <text>AMP + phosphate = alpha-D-ribose 1,5-bisphosphate + adenine</text>
        <dbReference type="Rhea" id="RHEA:36975"/>
        <dbReference type="ChEBI" id="CHEBI:16708"/>
        <dbReference type="ChEBI" id="CHEBI:43474"/>
        <dbReference type="ChEBI" id="CHEBI:68688"/>
        <dbReference type="ChEBI" id="CHEBI:456215"/>
        <dbReference type="EC" id="2.4.2.57"/>
    </reaction>
</comment>
<comment type="catalytic activity">
    <reaction evidence="1">
        <text>CMP + phosphate = cytosine + alpha-D-ribose 1,5-bisphosphate</text>
        <dbReference type="Rhea" id="RHEA:36987"/>
        <dbReference type="ChEBI" id="CHEBI:16040"/>
        <dbReference type="ChEBI" id="CHEBI:43474"/>
        <dbReference type="ChEBI" id="CHEBI:60377"/>
        <dbReference type="ChEBI" id="CHEBI:68688"/>
        <dbReference type="EC" id="2.4.2.57"/>
    </reaction>
</comment>
<comment type="catalytic activity">
    <reaction evidence="1">
        <text>UMP + phosphate = alpha-D-ribose 1,5-bisphosphate + uracil</text>
        <dbReference type="Rhea" id="RHEA:36991"/>
        <dbReference type="ChEBI" id="CHEBI:17568"/>
        <dbReference type="ChEBI" id="CHEBI:43474"/>
        <dbReference type="ChEBI" id="CHEBI:57865"/>
        <dbReference type="ChEBI" id="CHEBI:68688"/>
        <dbReference type="EC" id="2.4.2.57"/>
    </reaction>
</comment>
<comment type="similarity">
    <text evidence="1">Belongs to the thymidine/pyrimidine-nucleoside phosphorylase family. Type 2 subfamily.</text>
</comment>
<dbReference type="EC" id="2.4.2.57" evidence="1"/>
<dbReference type="EMBL" id="CP000300">
    <property type="protein sequence ID" value="ABE51262.1"/>
    <property type="molecule type" value="Genomic_DNA"/>
</dbReference>
<dbReference type="RefSeq" id="WP_011498424.1">
    <property type="nucleotide sequence ID" value="NC_007955.1"/>
</dbReference>
<dbReference type="SMR" id="Q12Z64"/>
<dbReference type="STRING" id="259564.Mbur_0255"/>
<dbReference type="GeneID" id="3998750"/>
<dbReference type="KEGG" id="mbu:Mbur_0255"/>
<dbReference type="HOGENOM" id="CLU_025040_6_0_2"/>
<dbReference type="OrthoDB" id="9827at2157"/>
<dbReference type="Proteomes" id="UP000001979">
    <property type="component" value="Chromosome"/>
</dbReference>
<dbReference type="GO" id="GO:0005829">
    <property type="term" value="C:cytosol"/>
    <property type="evidence" value="ECO:0007669"/>
    <property type="project" value="TreeGrafter"/>
</dbReference>
<dbReference type="GO" id="GO:0004645">
    <property type="term" value="F:1,4-alpha-oligoglucan phosphorylase activity"/>
    <property type="evidence" value="ECO:0007669"/>
    <property type="project" value="InterPro"/>
</dbReference>
<dbReference type="GO" id="GO:0016208">
    <property type="term" value="F:AMP binding"/>
    <property type="evidence" value="ECO:0007669"/>
    <property type="project" value="UniProtKB-UniRule"/>
</dbReference>
<dbReference type="GO" id="GO:0016763">
    <property type="term" value="F:pentosyltransferase activity"/>
    <property type="evidence" value="ECO:0007669"/>
    <property type="project" value="UniProtKB-UniRule"/>
</dbReference>
<dbReference type="GO" id="GO:0006196">
    <property type="term" value="P:AMP catabolic process"/>
    <property type="evidence" value="ECO:0007669"/>
    <property type="project" value="UniProtKB-UniRule"/>
</dbReference>
<dbReference type="GO" id="GO:0046125">
    <property type="term" value="P:pyrimidine deoxyribonucleoside metabolic process"/>
    <property type="evidence" value="ECO:0007669"/>
    <property type="project" value="InterPro"/>
</dbReference>
<dbReference type="GO" id="GO:0006206">
    <property type="term" value="P:pyrimidine nucleobase metabolic process"/>
    <property type="evidence" value="ECO:0007669"/>
    <property type="project" value="InterPro"/>
</dbReference>
<dbReference type="CDD" id="cd02775">
    <property type="entry name" value="MopB_CT"/>
    <property type="match status" value="1"/>
</dbReference>
<dbReference type="Gene3D" id="1.20.970.50">
    <property type="match status" value="1"/>
</dbReference>
<dbReference type="Gene3D" id="2.40.40.20">
    <property type="match status" value="1"/>
</dbReference>
<dbReference type="Gene3D" id="3.40.1030.10">
    <property type="entry name" value="Nucleoside phosphorylase/phosphoribosyltransferase catalytic domain"/>
    <property type="match status" value="1"/>
</dbReference>
<dbReference type="Gene3D" id="3.90.1170.30">
    <property type="entry name" value="Pyrimidine nucleoside phosphorylase-like, C-terminal domain"/>
    <property type="match status" value="1"/>
</dbReference>
<dbReference type="HAMAP" id="MF_02132">
    <property type="entry name" value="AMP_phosphorylase"/>
    <property type="match status" value="1"/>
</dbReference>
<dbReference type="InterPro" id="IPR017713">
    <property type="entry name" value="AMP_phosphorylase"/>
</dbReference>
<dbReference type="InterPro" id="IPR009010">
    <property type="entry name" value="Asp_de-COase-like_dom_sf"/>
</dbReference>
<dbReference type="InterPro" id="IPR000312">
    <property type="entry name" value="Glycosyl_Trfase_fam3"/>
</dbReference>
<dbReference type="InterPro" id="IPR017459">
    <property type="entry name" value="Glycosyl_Trfase_fam3_N_dom"/>
</dbReference>
<dbReference type="InterPro" id="IPR036320">
    <property type="entry name" value="Glycosyl_Trfase_fam3_N_dom_sf"/>
</dbReference>
<dbReference type="InterPro" id="IPR035902">
    <property type="entry name" value="Nuc_phospho_transferase"/>
</dbReference>
<dbReference type="InterPro" id="IPR036566">
    <property type="entry name" value="PYNP-like_C_sf"/>
</dbReference>
<dbReference type="InterPro" id="IPR013102">
    <property type="entry name" value="PYNP_C"/>
</dbReference>
<dbReference type="InterPro" id="IPR017872">
    <property type="entry name" value="Pyrmidine_PPase_CS"/>
</dbReference>
<dbReference type="InterPro" id="IPR013466">
    <property type="entry name" value="Thymidine/AMP_Pase"/>
</dbReference>
<dbReference type="InterPro" id="IPR000053">
    <property type="entry name" value="Thymidine/pyrmidine_PPase"/>
</dbReference>
<dbReference type="NCBIfam" id="TIGR03327">
    <property type="entry name" value="AMP_phos"/>
    <property type="match status" value="1"/>
</dbReference>
<dbReference type="NCBIfam" id="TIGR02645">
    <property type="entry name" value="ARCH_P_rylase"/>
    <property type="match status" value="1"/>
</dbReference>
<dbReference type="NCBIfam" id="NF003338">
    <property type="entry name" value="PRK04350.1"/>
    <property type="match status" value="1"/>
</dbReference>
<dbReference type="NCBIfam" id="NF004490">
    <property type="entry name" value="PRK05820.1"/>
    <property type="match status" value="1"/>
</dbReference>
<dbReference type="PANTHER" id="PTHR10515">
    <property type="entry name" value="THYMIDINE PHOSPHORYLASE"/>
    <property type="match status" value="1"/>
</dbReference>
<dbReference type="PANTHER" id="PTHR10515:SF0">
    <property type="entry name" value="THYMIDINE PHOSPHORYLASE"/>
    <property type="match status" value="1"/>
</dbReference>
<dbReference type="Pfam" id="PF02885">
    <property type="entry name" value="Glycos_trans_3N"/>
    <property type="match status" value="1"/>
</dbReference>
<dbReference type="Pfam" id="PF00591">
    <property type="entry name" value="Glycos_transf_3"/>
    <property type="match status" value="1"/>
</dbReference>
<dbReference type="Pfam" id="PF07831">
    <property type="entry name" value="PYNP_C"/>
    <property type="match status" value="1"/>
</dbReference>
<dbReference type="SMART" id="SM00941">
    <property type="entry name" value="PYNP_C"/>
    <property type="match status" value="1"/>
</dbReference>
<dbReference type="SUPFAM" id="SSF50692">
    <property type="entry name" value="ADC-like"/>
    <property type="match status" value="1"/>
</dbReference>
<dbReference type="SUPFAM" id="SSF52418">
    <property type="entry name" value="Nucleoside phosphorylase/phosphoribosyltransferase catalytic domain"/>
    <property type="match status" value="1"/>
</dbReference>
<dbReference type="SUPFAM" id="SSF47648">
    <property type="entry name" value="Nucleoside phosphorylase/phosphoribosyltransferase N-terminal domain"/>
    <property type="match status" value="1"/>
</dbReference>
<dbReference type="SUPFAM" id="SSF54680">
    <property type="entry name" value="Pyrimidine nucleoside phosphorylase C-terminal domain"/>
    <property type="match status" value="1"/>
</dbReference>
<dbReference type="PROSITE" id="PS00647">
    <property type="entry name" value="THYMID_PHOSPHORYLASE"/>
    <property type="match status" value="1"/>
</dbReference>
<evidence type="ECO:0000255" key="1">
    <source>
        <dbReference type="HAMAP-Rule" id="MF_02132"/>
    </source>
</evidence>
<sequence length="506" mass="55123">MQLKVQPIDVKVGKYKVILNTIDAKELGVHEGDRVRIKNHVTLTAIVDFTEDMISPGMIGLYHEVKEALSKEWTETVEVFPAEKPKSTYIIRKTMDGQKLTKEEIDILVKDIVEENLAEIEIAAFLTATYINDMTDDETEWLTRAMIDSGDKLEFDTHPIMDKHSIGGVPGNKISLLIVPIVAANGLLIPKTSSRAITGAGGTADLMEILAPVEFDAAEIKRMTEEVGGVLVWGGATNIAPADDKLIKVEYPLSIDPHCQMLASIMAKKGAIGADHVVMDIPTGPGTKIKNVQEGRKLARDLINLGDRLGMDVDCALTYGASPVGRTIGPALEVIEALKVLESFEGPNSLIEKSASLAGMLLEMGNVAGKDKGYDLAIETLKNGKALTKFKEIIKIQGGNPDVTHKDISVGEFTEDIIAPNNGYILEMDNKRLVQIARLAGAPNDKGAGILLHRKQGEPLKEGDPVMTIYAEKKSKLENAVKSAKERPPFIVEGMMLERIQSFKEI</sequence>
<accession>Q12Z64</accession>
<proteinExistence type="inferred from homology"/>
<feature type="chain" id="PRO_0000314720" description="AMP phosphorylase">
    <location>
        <begin position="1"/>
        <end position="506"/>
    </location>
</feature>
<feature type="active site" description="Proton donor" evidence="1">
    <location>
        <position position="256"/>
    </location>
</feature>
<feature type="binding site" evidence="1">
    <location>
        <position position="168"/>
    </location>
    <ligand>
        <name>AMP</name>
        <dbReference type="ChEBI" id="CHEBI:456215"/>
    </ligand>
</feature>
<feature type="binding site" evidence="1">
    <location>
        <begin position="194"/>
        <end position="199"/>
    </location>
    <ligand>
        <name>AMP</name>
        <dbReference type="ChEBI" id="CHEBI:456215"/>
    </ligand>
</feature>
<feature type="binding site" evidence="1">
    <location>
        <position position="203"/>
    </location>
    <ligand>
        <name>AMP</name>
        <dbReference type="ChEBI" id="CHEBI:456215"/>
    </ligand>
</feature>
<feature type="binding site" evidence="1">
    <location>
        <position position="264"/>
    </location>
    <ligand>
        <name>AMP</name>
        <dbReference type="ChEBI" id="CHEBI:456215"/>
    </ligand>
</feature>
<feature type="binding site" evidence="1">
    <location>
        <position position="288"/>
    </location>
    <ligand>
        <name>AMP</name>
        <dbReference type="ChEBI" id="CHEBI:456215"/>
    </ligand>
</feature>
<protein>
    <recommendedName>
        <fullName evidence="1">AMP phosphorylase</fullName>
        <shortName evidence="1">AMPpase</shortName>
        <ecNumber evidence="1">2.4.2.57</ecNumber>
    </recommendedName>
    <alternativeName>
        <fullName evidence="1">Nucleoside monophosphate phosphorylase</fullName>
        <shortName evidence="1">NMP phosphorylase</shortName>
    </alternativeName>
</protein>
<reference key="1">
    <citation type="journal article" date="2009" name="ISME J.">
        <title>The genome sequence of the psychrophilic archaeon, Methanococcoides burtonii: the role of genome evolution in cold adaptation.</title>
        <authorList>
            <person name="Allen M.A."/>
            <person name="Lauro F.M."/>
            <person name="Williams T.J."/>
            <person name="Burg D."/>
            <person name="Siddiqui K.S."/>
            <person name="De Francisci D."/>
            <person name="Chong K.W."/>
            <person name="Pilak O."/>
            <person name="Chew H.H."/>
            <person name="De Maere M.Z."/>
            <person name="Ting L."/>
            <person name="Katrib M."/>
            <person name="Ng C."/>
            <person name="Sowers K.R."/>
            <person name="Galperin M.Y."/>
            <person name="Anderson I.J."/>
            <person name="Ivanova N."/>
            <person name="Dalin E."/>
            <person name="Martinez M."/>
            <person name="Lapidus A."/>
            <person name="Hauser L."/>
            <person name="Land M."/>
            <person name="Thomas T."/>
            <person name="Cavicchioli R."/>
        </authorList>
    </citation>
    <scope>NUCLEOTIDE SEQUENCE [LARGE SCALE GENOMIC DNA]</scope>
    <source>
        <strain>DSM 6242 / NBRC 107633 / OCM 468 / ACE-M</strain>
    </source>
</reference>
<keyword id="KW-0328">Glycosyltransferase</keyword>
<keyword id="KW-0808">Transferase</keyword>